<reference key="1">
    <citation type="journal article" date="2002" name="Biochem. J.">
        <title>Phosphorylation of a novel zinc-finger-like protein, ZPR9, by murine protein serine/threonine kinase 38 (MPK38).</title>
        <authorList>
            <person name="Seong H.-A."/>
            <person name="Gil M."/>
            <person name="Kim K.-T."/>
            <person name="Kim S.-J."/>
            <person name="Ha H."/>
        </authorList>
    </citation>
    <scope>NUCLEOTIDE SEQUENCE [MRNA]</scope>
    <scope>PHOSPHORYLATION</scope>
    <scope>TISSUE SPECIFICITY</scope>
    <scope>SUBCELLULAR LOCATION</scope>
    <scope>INTERACTION WITH MELK</scope>
    <source>
        <tissue>Keratinocyte</tissue>
    </source>
</reference>
<reference key="2">
    <citation type="journal article" date="2004" name="Genome Res.">
        <title>The status, quality, and expansion of the NIH full-length cDNA project: the Mammalian Gene Collection (MGC).</title>
        <authorList>
            <consortium name="The MGC Project Team"/>
        </authorList>
    </citation>
    <scope>NUCLEOTIDE SEQUENCE [LARGE SCALE MRNA]</scope>
    <source>
        <tissue>Cervix</tissue>
        <tissue>Skin</tissue>
    </source>
</reference>
<reference key="3">
    <citation type="journal article" date="2003" name="J. Biol. Chem.">
        <title>Enhancement of B-MYB transcriptional activity by ZPR9, a novel zinc finger protein.</title>
        <authorList>
            <person name="Seong H.A."/>
            <person name="Kim K.T."/>
            <person name="Ha H."/>
        </authorList>
    </citation>
    <scope>INTERACTION WITH MYBL2</scope>
</reference>
<reference key="4">
    <citation type="journal article" date="2008" name="Proc. Natl. Acad. Sci. U.S.A.">
        <title>A quantitative atlas of mitotic phosphorylation.</title>
        <authorList>
            <person name="Dephoure N."/>
            <person name="Zhou C."/>
            <person name="Villen J."/>
            <person name="Beausoleil S.A."/>
            <person name="Bakalarski C.E."/>
            <person name="Elledge S.J."/>
            <person name="Gygi S.P."/>
        </authorList>
    </citation>
    <scope>PHOSPHORYLATION [LARGE SCALE ANALYSIS] AT SER-276</scope>
    <scope>IDENTIFICATION BY MASS SPECTROMETRY [LARGE SCALE ANALYSIS]</scope>
    <source>
        <tissue>Cervix carcinoma</tissue>
    </source>
</reference>
<reference key="5">
    <citation type="journal article" date="2010" name="Sci. Signal.">
        <title>Quantitative phosphoproteomics reveals widespread full phosphorylation site occupancy during mitosis.</title>
        <authorList>
            <person name="Olsen J.V."/>
            <person name="Vermeulen M."/>
            <person name="Santamaria A."/>
            <person name="Kumar C."/>
            <person name="Miller M.L."/>
            <person name="Jensen L.J."/>
            <person name="Gnad F."/>
            <person name="Cox J."/>
            <person name="Jensen T.S."/>
            <person name="Nigg E.A."/>
            <person name="Brunak S."/>
            <person name="Mann M."/>
        </authorList>
    </citation>
    <scope>PHOSPHORYLATION [LARGE SCALE ANALYSIS] AT SER-276</scope>
    <scope>IDENTIFICATION BY MASS SPECTROMETRY [LARGE SCALE ANALYSIS]</scope>
    <source>
        <tissue>Cervix carcinoma</tissue>
    </source>
</reference>
<reference key="6">
    <citation type="journal article" date="2011" name="BMC Syst. Biol.">
        <title>Initial characterization of the human central proteome.</title>
        <authorList>
            <person name="Burkard T.R."/>
            <person name="Planyavsky M."/>
            <person name="Kaupe I."/>
            <person name="Breitwieser F.P."/>
            <person name="Buerckstuemmer T."/>
            <person name="Bennett K.L."/>
            <person name="Superti-Furga G."/>
            <person name="Colinge J."/>
        </authorList>
    </citation>
    <scope>IDENTIFICATION BY MASS SPECTROMETRY [LARGE SCALE ANALYSIS]</scope>
</reference>
<reference key="7">
    <citation type="journal article" date="2012" name="Mol. Cell. Proteomics">
        <title>Comparative large-scale characterisation of plant vs. mammal proteins reveals similar and idiosyncratic N-alpha acetylation features.</title>
        <authorList>
            <person name="Bienvenut W.V."/>
            <person name="Sumpton D."/>
            <person name="Martinez A."/>
            <person name="Lilla S."/>
            <person name="Espagne C."/>
            <person name="Meinnel T."/>
            <person name="Giglione C."/>
        </authorList>
    </citation>
    <scope>ACETYLATION [LARGE SCALE ANALYSIS] AT ALA-2</scope>
    <scope>CLEAVAGE OF INITIATOR METHIONINE [LARGE SCALE ANALYSIS]</scope>
    <scope>IDENTIFICATION BY MASS SPECTROMETRY [LARGE SCALE ANALYSIS]</scope>
</reference>
<reference key="8">
    <citation type="journal article" date="2016" name="Am. J. Hum. Genet.">
        <title>DNAJC21 mutations link a cancer-prone bone marrow failure syndrome to corruption in 60S ribosome subunit maturation.</title>
        <authorList>
            <person name="Tummala H."/>
            <person name="Walne A.J."/>
            <person name="Williams M."/>
            <person name="Bockett N."/>
            <person name="Collopy L."/>
            <person name="Cardoso S."/>
            <person name="Ellison A."/>
            <person name="Wynn R."/>
            <person name="Leblanc T."/>
            <person name="Fitzgibbon J."/>
            <person name="Kelsell D.P."/>
            <person name="van Heel D.A."/>
            <person name="Payne E."/>
            <person name="Plagnol V."/>
            <person name="Dokal I."/>
            <person name="Vulliamy T."/>
        </authorList>
    </citation>
    <scope>INTERACTION WITH DNAJC21</scope>
</reference>
<reference key="9">
    <citation type="journal article" date="2021" name="Cell Stem Cell">
        <title>HectD1 controls hematopoietic stem cell regeneration by coordinating ribosome assembly and protein synthesis.</title>
        <authorList>
            <person name="Lv K."/>
            <person name="Gong C."/>
            <person name="Antony C."/>
            <person name="Han X."/>
            <person name="Ren J.G."/>
            <person name="Donaghy R."/>
            <person name="Cheng Y."/>
            <person name="Pellegrino S."/>
            <person name="Warren A.J."/>
            <person name="Paralkar V.R."/>
            <person name="Tong W."/>
        </authorList>
    </citation>
    <scope>FUNCTION</scope>
    <scope>UBIQUITINATION</scope>
</reference>
<reference evidence="11 12" key="10">
    <citation type="journal article" date="2020" name="Nat. Commun.">
        <title>Structural snapshots of human pre-60S ribosomal particles before and after nuclear export.</title>
        <authorList>
            <person name="Liang X."/>
            <person name="Zuo M.Q."/>
            <person name="Zhang Y."/>
            <person name="Li N."/>
            <person name="Ma C."/>
            <person name="Dong M.Q."/>
            <person name="Gao N."/>
        </authorList>
    </citation>
    <scope>STRUCTURE BY ELECTRON MICROSCOPY (3.09 ANGSTROMS) IN COMPLEX WITH PRE-60S RIBOSOMAL PARTICLES</scope>
    <scope>INTERACTION WITH PRE-60S RIBOSOMAL PARTICLES</scope>
</reference>
<organism>
    <name type="scientific">Homo sapiens</name>
    <name type="common">Human</name>
    <dbReference type="NCBI Taxonomy" id="9606"/>
    <lineage>
        <taxon>Eukaryota</taxon>
        <taxon>Metazoa</taxon>
        <taxon>Chordata</taxon>
        <taxon>Craniata</taxon>
        <taxon>Vertebrata</taxon>
        <taxon>Euteleostomi</taxon>
        <taxon>Mammalia</taxon>
        <taxon>Eutheria</taxon>
        <taxon>Euarchontoglires</taxon>
        <taxon>Primates</taxon>
        <taxon>Haplorrhini</taxon>
        <taxon>Catarrhini</taxon>
        <taxon>Hominidae</taxon>
        <taxon>Homo</taxon>
    </lineage>
</organism>
<proteinExistence type="evidence at protein level"/>
<dbReference type="EMBL" id="AY046059">
    <property type="protein sequence ID" value="AAL02121.1"/>
    <property type="molecule type" value="mRNA"/>
</dbReference>
<dbReference type="EMBL" id="BC008752">
    <property type="protein sequence ID" value="AAH08752.1"/>
    <property type="molecule type" value="mRNA"/>
</dbReference>
<dbReference type="EMBL" id="BC010545">
    <property type="protein sequence ID" value="AAH10545.1"/>
    <property type="molecule type" value="mRNA"/>
</dbReference>
<dbReference type="CCDS" id="CCDS3886.1"/>
<dbReference type="RefSeq" id="NP_219482.1">
    <property type="nucleotide sequence ID" value="NM_033414.3"/>
</dbReference>
<dbReference type="PDB" id="6LQM">
    <property type="method" value="EM"/>
    <property type="resolution" value="3.09 A"/>
    <property type="chains" value="0=1-477"/>
</dbReference>
<dbReference type="PDB" id="6LSR">
    <property type="method" value="EM"/>
    <property type="resolution" value="3.13 A"/>
    <property type="chains" value="0=1-477"/>
</dbReference>
<dbReference type="PDB" id="9GMO">
    <property type="method" value="EM"/>
    <property type="resolution" value="2.59 A"/>
    <property type="chains" value="0=1-477"/>
</dbReference>
<dbReference type="PDBsum" id="6LQM"/>
<dbReference type="PDBsum" id="6LSR"/>
<dbReference type="PDBsum" id="9GMO"/>
<dbReference type="EMDB" id="EMD-0948"/>
<dbReference type="EMDB" id="EMD-0963"/>
<dbReference type="EMDB" id="EMD-51452"/>
<dbReference type="SMR" id="Q969S3"/>
<dbReference type="BioGRID" id="124717">
    <property type="interactions" value="154"/>
</dbReference>
<dbReference type="FunCoup" id="Q969S3">
    <property type="interactions" value="2758"/>
</dbReference>
<dbReference type="IntAct" id="Q969S3">
    <property type="interactions" value="70"/>
</dbReference>
<dbReference type="MINT" id="Q969S3"/>
<dbReference type="STRING" id="9606.ENSP00000310042"/>
<dbReference type="GlyGen" id="Q969S3">
    <property type="glycosylation" value="1 site, 1 O-linked glycan (1 site)"/>
</dbReference>
<dbReference type="iPTMnet" id="Q969S3"/>
<dbReference type="MetOSite" id="Q969S3"/>
<dbReference type="PhosphoSitePlus" id="Q969S3"/>
<dbReference type="BioMuta" id="ZNF622"/>
<dbReference type="DMDM" id="50401777"/>
<dbReference type="jPOST" id="Q969S3"/>
<dbReference type="MassIVE" id="Q969S3"/>
<dbReference type="PaxDb" id="9606-ENSP00000310042"/>
<dbReference type="PeptideAtlas" id="Q969S3"/>
<dbReference type="ProteomicsDB" id="75831"/>
<dbReference type="Pumba" id="Q969S3"/>
<dbReference type="Antibodypedia" id="22565">
    <property type="antibodies" value="176 antibodies from 23 providers"/>
</dbReference>
<dbReference type="DNASU" id="90441"/>
<dbReference type="Ensembl" id="ENST00000308683.3">
    <property type="protein sequence ID" value="ENSP00000310042.2"/>
    <property type="gene ID" value="ENSG00000173545.5"/>
</dbReference>
<dbReference type="GeneID" id="90441"/>
<dbReference type="KEGG" id="hsa:90441"/>
<dbReference type="MANE-Select" id="ENST00000308683.3">
    <property type="protein sequence ID" value="ENSP00000310042.2"/>
    <property type="RefSeq nucleotide sequence ID" value="NM_033414.3"/>
    <property type="RefSeq protein sequence ID" value="NP_219482.1"/>
</dbReference>
<dbReference type="UCSC" id="uc003jfq.4">
    <property type="organism name" value="human"/>
</dbReference>
<dbReference type="AGR" id="HGNC:30958"/>
<dbReference type="CTD" id="90441"/>
<dbReference type="DisGeNET" id="90441"/>
<dbReference type="GeneCards" id="ZNF622"/>
<dbReference type="HGNC" id="HGNC:30958">
    <property type="gene designation" value="ZNF622"/>
</dbReference>
<dbReference type="HPA" id="ENSG00000173545">
    <property type="expression patterns" value="Low tissue specificity"/>
</dbReference>
<dbReference type="MIM" id="608694">
    <property type="type" value="gene"/>
</dbReference>
<dbReference type="neXtProt" id="NX_Q969S3"/>
<dbReference type="OpenTargets" id="ENSG00000173545"/>
<dbReference type="PharmGKB" id="PA134992557"/>
<dbReference type="VEuPathDB" id="HostDB:ENSG00000173545"/>
<dbReference type="eggNOG" id="KOG2785">
    <property type="taxonomic scope" value="Eukaryota"/>
</dbReference>
<dbReference type="GeneTree" id="ENSGT00390000018047"/>
<dbReference type="HOGENOM" id="CLU_018787_0_2_1"/>
<dbReference type="InParanoid" id="Q969S3"/>
<dbReference type="OMA" id="WTQTQQQ"/>
<dbReference type="OrthoDB" id="19329at2759"/>
<dbReference type="PAN-GO" id="Q969S3">
    <property type="GO annotations" value="2 GO annotations based on evolutionary models"/>
</dbReference>
<dbReference type="PhylomeDB" id="Q969S3"/>
<dbReference type="TreeFam" id="TF313094"/>
<dbReference type="PathwayCommons" id="Q969S3"/>
<dbReference type="SignaLink" id="Q969S3"/>
<dbReference type="SIGNOR" id="Q969S3"/>
<dbReference type="BioGRID-ORCS" id="90441">
    <property type="hits" value="151 hits in 1161 CRISPR screens"/>
</dbReference>
<dbReference type="CD-CODE" id="91857CE7">
    <property type="entry name" value="Nucleolus"/>
</dbReference>
<dbReference type="ChiTaRS" id="ZNF622">
    <property type="organism name" value="human"/>
</dbReference>
<dbReference type="GenomeRNAi" id="90441"/>
<dbReference type="Pharos" id="Q969S3">
    <property type="development level" value="Tbio"/>
</dbReference>
<dbReference type="PRO" id="PR:Q969S3"/>
<dbReference type="Proteomes" id="UP000005640">
    <property type="component" value="Chromosome 5"/>
</dbReference>
<dbReference type="RNAct" id="Q969S3">
    <property type="molecule type" value="protein"/>
</dbReference>
<dbReference type="Bgee" id="ENSG00000173545">
    <property type="expression patterns" value="Expressed in left ventricle myocardium and 186 other cell types or tissues"/>
</dbReference>
<dbReference type="GO" id="GO:0005829">
    <property type="term" value="C:cytosol"/>
    <property type="evidence" value="ECO:0000314"/>
    <property type="project" value="HPA"/>
</dbReference>
<dbReference type="GO" id="GO:0005794">
    <property type="term" value="C:Golgi apparatus"/>
    <property type="evidence" value="ECO:0000314"/>
    <property type="project" value="HPA"/>
</dbReference>
<dbReference type="GO" id="GO:0005730">
    <property type="term" value="C:nucleolus"/>
    <property type="evidence" value="ECO:0000314"/>
    <property type="project" value="HPA"/>
</dbReference>
<dbReference type="GO" id="GO:0005654">
    <property type="term" value="C:nucleoplasm"/>
    <property type="evidence" value="ECO:0000314"/>
    <property type="project" value="HPA"/>
</dbReference>
<dbReference type="GO" id="GO:0030687">
    <property type="term" value="C:preribosome, large subunit precursor"/>
    <property type="evidence" value="ECO:0000318"/>
    <property type="project" value="GO_Central"/>
</dbReference>
<dbReference type="GO" id="GO:1990275">
    <property type="term" value="F:preribosome binding"/>
    <property type="evidence" value="ECO:0000314"/>
    <property type="project" value="UniProtKB"/>
</dbReference>
<dbReference type="GO" id="GO:0003723">
    <property type="term" value="F:RNA binding"/>
    <property type="evidence" value="ECO:0007005"/>
    <property type="project" value="UniProtKB"/>
</dbReference>
<dbReference type="GO" id="GO:0008270">
    <property type="term" value="F:zinc ion binding"/>
    <property type="evidence" value="ECO:0007669"/>
    <property type="project" value="UniProtKB-KW"/>
</dbReference>
<dbReference type="GO" id="GO:0008631">
    <property type="term" value="P:intrinsic apoptotic signaling pathway in response to oxidative stress"/>
    <property type="evidence" value="ECO:0000314"/>
    <property type="project" value="UniProtKB"/>
</dbReference>
<dbReference type="GO" id="GO:0043065">
    <property type="term" value="P:positive regulation of apoptotic process"/>
    <property type="evidence" value="ECO:0000314"/>
    <property type="project" value="UniProtKB"/>
</dbReference>
<dbReference type="GO" id="GO:0046330">
    <property type="term" value="P:positive regulation of JNK cascade"/>
    <property type="evidence" value="ECO:0000315"/>
    <property type="project" value="UniProtKB"/>
</dbReference>
<dbReference type="GO" id="GO:0033674">
    <property type="term" value="P:positive regulation of kinase activity"/>
    <property type="evidence" value="ECO:0000314"/>
    <property type="project" value="UniProtKB"/>
</dbReference>
<dbReference type="GO" id="GO:0043410">
    <property type="term" value="P:positive regulation of MAPK cascade"/>
    <property type="evidence" value="ECO:0000314"/>
    <property type="project" value="UniProtKB"/>
</dbReference>
<dbReference type="GO" id="GO:0042273">
    <property type="term" value="P:ribosomal large subunit biogenesis"/>
    <property type="evidence" value="ECO:0000314"/>
    <property type="project" value="UniProtKB"/>
</dbReference>
<dbReference type="FunFam" id="3.30.160.60:FF:000915">
    <property type="entry name" value="Zinc finger protein 622"/>
    <property type="match status" value="1"/>
</dbReference>
<dbReference type="Gene3D" id="3.30.160.60">
    <property type="entry name" value="Classic Zinc Finger"/>
    <property type="match status" value="1"/>
</dbReference>
<dbReference type="InterPro" id="IPR003604">
    <property type="entry name" value="Matrin/U1-like-C_Znf_C2H2"/>
</dbReference>
<dbReference type="InterPro" id="IPR041661">
    <property type="entry name" value="ZN622/Rei1/Reh1_Znf-C2H2"/>
</dbReference>
<dbReference type="InterPro" id="IPR040025">
    <property type="entry name" value="Znf622/Rei1/Reh1"/>
</dbReference>
<dbReference type="InterPro" id="IPR022755">
    <property type="entry name" value="Znf_C2H2_jaz"/>
</dbReference>
<dbReference type="InterPro" id="IPR036236">
    <property type="entry name" value="Znf_C2H2_sf"/>
</dbReference>
<dbReference type="InterPro" id="IPR013087">
    <property type="entry name" value="Znf_C2H2_type"/>
</dbReference>
<dbReference type="PANTHER" id="PTHR13182:SF8">
    <property type="entry name" value="CYTOPLASMIC 60S SUBUNIT BIOGENESIS FACTOR ZNF622"/>
    <property type="match status" value="1"/>
</dbReference>
<dbReference type="PANTHER" id="PTHR13182">
    <property type="entry name" value="ZINC FINGER PROTEIN 622"/>
    <property type="match status" value="1"/>
</dbReference>
<dbReference type="Pfam" id="PF12756">
    <property type="entry name" value="zf-C2H2_2"/>
    <property type="match status" value="1"/>
</dbReference>
<dbReference type="Pfam" id="PF12171">
    <property type="entry name" value="zf-C2H2_jaz"/>
    <property type="match status" value="1"/>
</dbReference>
<dbReference type="SMART" id="SM00355">
    <property type="entry name" value="ZnF_C2H2"/>
    <property type="match status" value="4"/>
</dbReference>
<dbReference type="SMART" id="SM00451">
    <property type="entry name" value="ZnF_U1"/>
    <property type="match status" value="2"/>
</dbReference>
<dbReference type="SUPFAM" id="SSF57667">
    <property type="entry name" value="beta-beta-alpha zinc fingers"/>
    <property type="match status" value="2"/>
</dbReference>
<accession>Q969S3</accession>
<keyword id="KW-0002">3D-structure</keyword>
<keyword id="KW-0007">Acetylation</keyword>
<keyword id="KW-0963">Cytoplasm</keyword>
<keyword id="KW-0479">Metal-binding</keyword>
<keyword id="KW-0539">Nucleus</keyword>
<keyword id="KW-0597">Phosphoprotein</keyword>
<keyword id="KW-1267">Proteomics identification</keyword>
<keyword id="KW-1185">Reference proteome</keyword>
<keyword id="KW-0677">Repeat</keyword>
<keyword id="KW-0690">Ribosome biogenesis</keyword>
<keyword id="KW-0832">Ubl conjugation</keyword>
<keyword id="KW-0862">Zinc</keyword>
<keyword id="KW-0863">Zinc-finger</keyword>
<comment type="function">
    <text evidence="6">Pre-60S-associated cytoplasmic factor involved in the cytoplasmic maturation of the 60S subunit.</text>
</comment>
<comment type="subunit">
    <text evidence="2 3 4 5">Homo- and heterodimer. Associates with pre-60S ribosomal particles (PubMed:32669547). Interacts with MELK and MYBL2 (PubMed:11802789, PubMed:12645566). Interacts with DNAJC21 (PubMed:27346687).</text>
</comment>
<comment type="interaction">
    <interactant intactId="EBI-2687480">
        <id>Q969S3</id>
    </interactant>
    <interactant intactId="EBI-10181188">
        <id>Q8N7W2-2</id>
        <label>BEND7</label>
    </interactant>
    <organismsDiffer>false</organismsDiffer>
    <experiments>3</experiments>
</comment>
<comment type="interaction">
    <interactant intactId="EBI-2687480">
        <id>Q969S3</id>
    </interactant>
    <interactant intactId="EBI-2868511">
        <id>O75367</id>
        <label>MACROH2A1</label>
    </interactant>
    <organismsDiffer>false</organismsDiffer>
    <experiments>3</experiments>
</comment>
<comment type="interaction">
    <interactant intactId="EBI-2687480">
        <id>Q969S3</id>
    </interactant>
    <interactant intactId="EBI-476263">
        <id>Q99683</id>
        <label>MAP3K5</label>
    </interactant>
    <organismsDiffer>false</organismsDiffer>
    <experiments>14</experiments>
</comment>
<comment type="subcellular location">
    <subcellularLocation>
        <location evidence="2">Cytoplasm</location>
    </subcellularLocation>
    <subcellularLocation>
        <location evidence="2">Nucleus</location>
    </subcellularLocation>
</comment>
<comment type="tissue specificity">
    <text evidence="2">Expressed in lung, kidney, spleen, liver and brain with lowest expression in kidney.</text>
</comment>
<comment type="PTM">
    <text evidence="2">Phosphorylated by MELK. The phosphorylation may redirect the protein to the nucleus.</text>
</comment>
<comment type="PTM">
    <text evidence="6">Ubiquitinated by HECTD1, leading to its degradation.</text>
</comment>
<comment type="similarity">
    <text evidence="9">Belongs to the REI1 family.</text>
</comment>
<gene>
    <name evidence="8 10" type="primary">ZNF622</name>
    <name evidence="7" type="synonym">ZPR9</name>
</gene>
<name>ZN622_HUMAN</name>
<protein>
    <recommendedName>
        <fullName evidence="9">Cytoplasmic 60S subunit biogenesis factor ZNF622</fullName>
    </recommendedName>
    <alternativeName>
        <fullName evidence="9">Zinc finger protein 622</fullName>
    </alternativeName>
    <alternativeName>
        <fullName evidence="7">Zinc finger-like protein 9</fullName>
    </alternativeName>
</protein>
<feature type="initiator methionine" description="Removed" evidence="15">
    <location>
        <position position="1"/>
    </location>
</feature>
<feature type="chain" id="PRO_0000191815" description="Cytoplasmic 60S subunit biogenesis factor ZNF622">
    <location>
        <begin position="2"/>
        <end position="477"/>
    </location>
</feature>
<feature type="zinc finger region" description="U1-type 1">
    <location>
        <begin position="4"/>
        <end position="28"/>
    </location>
</feature>
<feature type="zinc finger region" description="U1-type 2">
    <location>
        <begin position="67"/>
        <end position="91"/>
    </location>
</feature>
<feature type="region of interest" description="Disordered" evidence="1">
    <location>
        <begin position="135"/>
        <end position="212"/>
    </location>
</feature>
<feature type="compositionally biased region" description="Basic and acidic residues" evidence="1">
    <location>
        <begin position="167"/>
        <end position="178"/>
    </location>
</feature>
<feature type="compositionally biased region" description="Acidic residues" evidence="1">
    <location>
        <begin position="196"/>
        <end position="212"/>
    </location>
</feature>
<feature type="modified residue" description="N-acetylalanine" evidence="15">
    <location>
        <position position="2"/>
    </location>
</feature>
<feature type="modified residue" description="Phosphoserine" evidence="13 14">
    <location>
        <position position="276"/>
    </location>
</feature>
<sequence length="477" mass="54272">MATYTCITCRVAFRDADMQRAHYKTDWHRYNLRRKVASMAPVTAEGFQERVRAQRAVAEEESKGSATYCTVCSKKFASFNAYENHLKSRRHVELEKKAVQAVNRKVEMMNEKNLEKGLGVDSVDKDAMNAAIQQAIKAQPSMSPKKAPPAPAKEARNVVAVGTGGRGTHDRDPSEKPPRLQWFEQQAKKLAKQQEEDSEEEEEDLDGDDWEDIDSDEELECEDTEAMDDVVEQDAEEEEAEEGPPLGAIPITDCLFCSHHSSSLMKNVAHMTKDHSFFIPDIEYLSDIKGLIKYLGEKVGVGKICLWCNEKGKSFYSTEAVQAHMNDKSHCKLFTDGDAALEFADFYDFRSSYPDHKEGEDPNKAEELPSEKNLEYDDETMELILPSGARVGHRSLMRYYKQRFGLSRAVAVAKNRKAVGRVLQQYRALGWTGSTGAALMRERDMQYVQRMKSKWMLKTGMKNNATKQMHFRVQVRF</sequence>
<evidence type="ECO:0000256" key="1">
    <source>
        <dbReference type="SAM" id="MobiDB-lite"/>
    </source>
</evidence>
<evidence type="ECO:0000269" key="2">
    <source>
    </source>
</evidence>
<evidence type="ECO:0000269" key="3">
    <source>
    </source>
</evidence>
<evidence type="ECO:0000269" key="4">
    <source>
    </source>
</evidence>
<evidence type="ECO:0000269" key="5">
    <source>
    </source>
</evidence>
<evidence type="ECO:0000269" key="6">
    <source>
    </source>
</evidence>
<evidence type="ECO:0000303" key="7">
    <source>
    </source>
</evidence>
<evidence type="ECO:0000303" key="8">
    <source>
    </source>
</evidence>
<evidence type="ECO:0000305" key="9"/>
<evidence type="ECO:0000312" key="10">
    <source>
        <dbReference type="HGNC" id="HGNC:30958"/>
    </source>
</evidence>
<evidence type="ECO:0007744" key="11">
    <source>
        <dbReference type="PDB" id="6LQM"/>
    </source>
</evidence>
<evidence type="ECO:0007744" key="12">
    <source>
        <dbReference type="PDB" id="6LSR"/>
    </source>
</evidence>
<evidence type="ECO:0007744" key="13">
    <source>
    </source>
</evidence>
<evidence type="ECO:0007744" key="14">
    <source>
    </source>
</evidence>
<evidence type="ECO:0007744" key="15">
    <source>
    </source>
</evidence>